<feature type="chain" id="PRO_0000374234" description="tRNA-2-methylthio-N(6)-dimethylallyladenosine synthase">
    <location>
        <begin position="1"/>
        <end position="453"/>
    </location>
</feature>
<feature type="domain" description="MTTase N-terminal" evidence="1">
    <location>
        <begin position="17"/>
        <end position="135"/>
    </location>
</feature>
<feature type="domain" description="Radical SAM core" evidence="2">
    <location>
        <begin position="158"/>
        <end position="388"/>
    </location>
</feature>
<feature type="domain" description="TRAM" evidence="1">
    <location>
        <begin position="391"/>
        <end position="453"/>
    </location>
</feature>
<feature type="binding site" evidence="1">
    <location>
        <position position="26"/>
    </location>
    <ligand>
        <name>[4Fe-4S] cluster</name>
        <dbReference type="ChEBI" id="CHEBI:49883"/>
        <label>1</label>
    </ligand>
</feature>
<feature type="binding site" evidence="1">
    <location>
        <position position="62"/>
    </location>
    <ligand>
        <name>[4Fe-4S] cluster</name>
        <dbReference type="ChEBI" id="CHEBI:49883"/>
        <label>1</label>
    </ligand>
</feature>
<feature type="binding site" evidence="1">
    <location>
        <position position="96"/>
    </location>
    <ligand>
        <name>[4Fe-4S] cluster</name>
        <dbReference type="ChEBI" id="CHEBI:49883"/>
        <label>1</label>
    </ligand>
</feature>
<feature type="binding site" evidence="1">
    <location>
        <position position="172"/>
    </location>
    <ligand>
        <name>[4Fe-4S] cluster</name>
        <dbReference type="ChEBI" id="CHEBI:49883"/>
        <label>2</label>
        <note>4Fe-4S-S-AdoMet</note>
    </ligand>
</feature>
<feature type="binding site" evidence="1">
    <location>
        <position position="176"/>
    </location>
    <ligand>
        <name>[4Fe-4S] cluster</name>
        <dbReference type="ChEBI" id="CHEBI:49883"/>
        <label>2</label>
        <note>4Fe-4S-S-AdoMet</note>
    </ligand>
</feature>
<feature type="binding site" evidence="1">
    <location>
        <position position="179"/>
    </location>
    <ligand>
        <name>[4Fe-4S] cluster</name>
        <dbReference type="ChEBI" id="CHEBI:49883"/>
        <label>2</label>
        <note>4Fe-4S-S-AdoMet</note>
    </ligand>
</feature>
<accession>Q895H1</accession>
<organism>
    <name type="scientific">Clostridium tetani (strain Massachusetts / E88)</name>
    <dbReference type="NCBI Taxonomy" id="212717"/>
    <lineage>
        <taxon>Bacteria</taxon>
        <taxon>Bacillati</taxon>
        <taxon>Bacillota</taxon>
        <taxon>Clostridia</taxon>
        <taxon>Eubacteriales</taxon>
        <taxon>Clostridiaceae</taxon>
        <taxon>Clostridium</taxon>
    </lineage>
</organism>
<protein>
    <recommendedName>
        <fullName evidence="1">tRNA-2-methylthio-N(6)-dimethylallyladenosine synthase</fullName>
        <ecNumber evidence="1">2.8.4.3</ecNumber>
    </recommendedName>
    <alternativeName>
        <fullName evidence="1">(Dimethylallyl)adenosine tRNA methylthiotransferase MiaB</fullName>
    </alternativeName>
    <alternativeName>
        <fullName evidence="1">tRNA-i(6)A37 methylthiotransferase</fullName>
    </alternativeName>
</protein>
<dbReference type="EC" id="2.8.4.3" evidence="1"/>
<dbReference type="EMBL" id="AE015927">
    <property type="protein sequence ID" value="AAO35869.1"/>
    <property type="molecule type" value="Genomic_DNA"/>
</dbReference>
<dbReference type="SMR" id="Q895H1"/>
<dbReference type="STRING" id="212717.CTC_01303"/>
<dbReference type="KEGG" id="ctc:CTC_01303"/>
<dbReference type="HOGENOM" id="CLU_018697_2_0_9"/>
<dbReference type="Proteomes" id="UP000001412">
    <property type="component" value="Chromosome"/>
</dbReference>
<dbReference type="GO" id="GO:0005829">
    <property type="term" value="C:cytosol"/>
    <property type="evidence" value="ECO:0007669"/>
    <property type="project" value="TreeGrafter"/>
</dbReference>
<dbReference type="GO" id="GO:0051539">
    <property type="term" value="F:4 iron, 4 sulfur cluster binding"/>
    <property type="evidence" value="ECO:0007669"/>
    <property type="project" value="UniProtKB-UniRule"/>
</dbReference>
<dbReference type="GO" id="GO:0046872">
    <property type="term" value="F:metal ion binding"/>
    <property type="evidence" value="ECO:0007669"/>
    <property type="project" value="UniProtKB-KW"/>
</dbReference>
<dbReference type="GO" id="GO:0035597">
    <property type="term" value="F:N6-isopentenyladenosine methylthiotransferase activity"/>
    <property type="evidence" value="ECO:0007669"/>
    <property type="project" value="TreeGrafter"/>
</dbReference>
<dbReference type="CDD" id="cd01335">
    <property type="entry name" value="Radical_SAM"/>
    <property type="match status" value="1"/>
</dbReference>
<dbReference type="FunFam" id="3.40.50.12160:FF:000006">
    <property type="entry name" value="tRNA-2-methylthio-N(6)-dimethylallyladenosine synthase"/>
    <property type="match status" value="1"/>
</dbReference>
<dbReference type="FunFam" id="3.80.30.20:FF:000001">
    <property type="entry name" value="tRNA-2-methylthio-N(6)-dimethylallyladenosine synthase 2"/>
    <property type="match status" value="1"/>
</dbReference>
<dbReference type="Gene3D" id="3.40.50.12160">
    <property type="entry name" value="Methylthiotransferase, N-terminal domain"/>
    <property type="match status" value="1"/>
</dbReference>
<dbReference type="Gene3D" id="3.80.30.20">
    <property type="entry name" value="tm_1862 like domain"/>
    <property type="match status" value="1"/>
</dbReference>
<dbReference type="HAMAP" id="MF_01864">
    <property type="entry name" value="tRNA_metthiotr_MiaB"/>
    <property type="match status" value="1"/>
</dbReference>
<dbReference type="InterPro" id="IPR006638">
    <property type="entry name" value="Elp3/MiaA/NifB-like_rSAM"/>
</dbReference>
<dbReference type="InterPro" id="IPR005839">
    <property type="entry name" value="Methylthiotransferase"/>
</dbReference>
<dbReference type="InterPro" id="IPR020612">
    <property type="entry name" value="Methylthiotransferase_CS"/>
</dbReference>
<dbReference type="InterPro" id="IPR013848">
    <property type="entry name" value="Methylthiotransferase_N"/>
</dbReference>
<dbReference type="InterPro" id="IPR038135">
    <property type="entry name" value="Methylthiotransferase_N_sf"/>
</dbReference>
<dbReference type="InterPro" id="IPR006463">
    <property type="entry name" value="MiaB_methiolase"/>
</dbReference>
<dbReference type="InterPro" id="IPR007197">
    <property type="entry name" value="rSAM"/>
</dbReference>
<dbReference type="InterPro" id="IPR023404">
    <property type="entry name" value="rSAM_horseshoe"/>
</dbReference>
<dbReference type="InterPro" id="IPR002792">
    <property type="entry name" value="TRAM_dom"/>
</dbReference>
<dbReference type="NCBIfam" id="TIGR01574">
    <property type="entry name" value="miaB-methiolase"/>
    <property type="match status" value="1"/>
</dbReference>
<dbReference type="NCBIfam" id="TIGR00089">
    <property type="entry name" value="MiaB/RimO family radical SAM methylthiotransferase"/>
    <property type="match status" value="1"/>
</dbReference>
<dbReference type="PANTHER" id="PTHR43020">
    <property type="entry name" value="CDK5 REGULATORY SUBUNIT-ASSOCIATED PROTEIN 1"/>
    <property type="match status" value="1"/>
</dbReference>
<dbReference type="PANTHER" id="PTHR43020:SF2">
    <property type="entry name" value="MITOCHONDRIAL TRNA METHYLTHIOTRANSFERASE CDK5RAP1"/>
    <property type="match status" value="1"/>
</dbReference>
<dbReference type="Pfam" id="PF04055">
    <property type="entry name" value="Radical_SAM"/>
    <property type="match status" value="1"/>
</dbReference>
<dbReference type="Pfam" id="PF01938">
    <property type="entry name" value="TRAM"/>
    <property type="match status" value="1"/>
</dbReference>
<dbReference type="Pfam" id="PF00919">
    <property type="entry name" value="UPF0004"/>
    <property type="match status" value="1"/>
</dbReference>
<dbReference type="SFLD" id="SFLDF00273">
    <property type="entry name" value="(dimethylallyl)adenosine_tRNA"/>
    <property type="match status" value="1"/>
</dbReference>
<dbReference type="SFLD" id="SFLDG01082">
    <property type="entry name" value="B12-binding_domain_containing"/>
    <property type="match status" value="1"/>
</dbReference>
<dbReference type="SFLD" id="SFLDG01061">
    <property type="entry name" value="methylthiotransferase"/>
    <property type="match status" value="1"/>
</dbReference>
<dbReference type="SMART" id="SM00729">
    <property type="entry name" value="Elp3"/>
    <property type="match status" value="1"/>
</dbReference>
<dbReference type="SUPFAM" id="SSF102114">
    <property type="entry name" value="Radical SAM enzymes"/>
    <property type="match status" value="1"/>
</dbReference>
<dbReference type="PROSITE" id="PS51449">
    <property type="entry name" value="MTTASE_N"/>
    <property type="match status" value="1"/>
</dbReference>
<dbReference type="PROSITE" id="PS01278">
    <property type="entry name" value="MTTASE_RADICAL"/>
    <property type="match status" value="1"/>
</dbReference>
<dbReference type="PROSITE" id="PS51918">
    <property type="entry name" value="RADICAL_SAM"/>
    <property type="match status" value="1"/>
</dbReference>
<dbReference type="PROSITE" id="PS50926">
    <property type="entry name" value="TRAM"/>
    <property type="match status" value="1"/>
</dbReference>
<gene>
    <name evidence="1" type="primary">miaB</name>
    <name type="ordered locus">CTC_01303</name>
</gene>
<name>MIAB_CLOTE</name>
<reference key="1">
    <citation type="journal article" date="2003" name="Proc. Natl. Acad. Sci. U.S.A.">
        <title>The genome sequence of Clostridium tetani, the causative agent of tetanus disease.</title>
        <authorList>
            <person name="Brueggemann H."/>
            <person name="Baeumer S."/>
            <person name="Fricke W.F."/>
            <person name="Wiezer A."/>
            <person name="Liesegang H."/>
            <person name="Decker I."/>
            <person name="Herzberg C."/>
            <person name="Martinez-Arias R."/>
            <person name="Merkl R."/>
            <person name="Henne A."/>
            <person name="Gottschalk G."/>
        </authorList>
    </citation>
    <scope>NUCLEOTIDE SEQUENCE [LARGE SCALE GENOMIC DNA]</scope>
    <source>
        <strain>Massachusetts / E88</strain>
    </source>
</reference>
<sequence length="453" mass="51894">MLNNIVNTIHSDKNQKGTFFIETWGCQMNEEDSEKLSGMLKNIGYKNAEDKNQADIIIFNTCCVRENAELKVYGNLGALKGLKSKNPNLIIAVCGCMMQQEGMAEAIIKKYPFVDIIFGTHNSYKFPEYLNRAKQEGKSIIEVWDKEEEIVEGIPVDRKSSTKAFVTIMYGCNNFCTYCIVPYVRGRERSREVSDIEKEIKELVKSGYKEITLLGQNVNSYGKDLEPKVSFAELLRHVNEIEGIERVRFMTSHPKDLTEDVIYAIKECDKLCNHIHLPVQSGSSRILKKMNRYYNREDYLNLVNKIKEEIPNVAITTDIIVGFPGETEEDFNETLELVKEVEYDSAFTFLYSKRKGTPAYDIEEQVPEDVKHDRFKKLVEVVNKSCEKNNKKYQDRIVKVLVEGESKNDKNKLSGRTDTAKLVNFIGNKDNIGKIVDVKITKTLSFSLEGEEV</sequence>
<keyword id="KW-0004">4Fe-4S</keyword>
<keyword id="KW-0963">Cytoplasm</keyword>
<keyword id="KW-0408">Iron</keyword>
<keyword id="KW-0411">Iron-sulfur</keyword>
<keyword id="KW-0479">Metal-binding</keyword>
<keyword id="KW-1185">Reference proteome</keyword>
<keyword id="KW-0949">S-adenosyl-L-methionine</keyword>
<keyword id="KW-0808">Transferase</keyword>
<keyword id="KW-0819">tRNA processing</keyword>
<comment type="function">
    <text evidence="1">Catalyzes the methylthiolation of N6-(dimethylallyl)adenosine (i(6)A), leading to the formation of 2-methylthio-N6-(dimethylallyl)adenosine (ms(2)i(6)A) at position 37 in tRNAs that read codons beginning with uridine.</text>
</comment>
<comment type="catalytic activity">
    <reaction evidence="1">
        <text>N(6)-dimethylallyladenosine(37) in tRNA + (sulfur carrier)-SH + AH2 + 2 S-adenosyl-L-methionine = 2-methylsulfanyl-N(6)-dimethylallyladenosine(37) in tRNA + (sulfur carrier)-H + 5'-deoxyadenosine + L-methionine + A + S-adenosyl-L-homocysteine + 2 H(+)</text>
        <dbReference type="Rhea" id="RHEA:37067"/>
        <dbReference type="Rhea" id="RHEA-COMP:10375"/>
        <dbReference type="Rhea" id="RHEA-COMP:10376"/>
        <dbReference type="Rhea" id="RHEA-COMP:14737"/>
        <dbReference type="Rhea" id="RHEA-COMP:14739"/>
        <dbReference type="ChEBI" id="CHEBI:13193"/>
        <dbReference type="ChEBI" id="CHEBI:15378"/>
        <dbReference type="ChEBI" id="CHEBI:17319"/>
        <dbReference type="ChEBI" id="CHEBI:17499"/>
        <dbReference type="ChEBI" id="CHEBI:29917"/>
        <dbReference type="ChEBI" id="CHEBI:57844"/>
        <dbReference type="ChEBI" id="CHEBI:57856"/>
        <dbReference type="ChEBI" id="CHEBI:59789"/>
        <dbReference type="ChEBI" id="CHEBI:64428"/>
        <dbReference type="ChEBI" id="CHEBI:74415"/>
        <dbReference type="ChEBI" id="CHEBI:74417"/>
        <dbReference type="EC" id="2.8.4.3"/>
    </reaction>
</comment>
<comment type="cofactor">
    <cofactor evidence="1">
        <name>[4Fe-4S] cluster</name>
        <dbReference type="ChEBI" id="CHEBI:49883"/>
    </cofactor>
    <text evidence="1">Binds 2 [4Fe-4S] clusters. One cluster is coordinated with 3 cysteines and an exchangeable S-adenosyl-L-methionine.</text>
</comment>
<comment type="subunit">
    <text evidence="1">Monomer.</text>
</comment>
<comment type="subcellular location">
    <subcellularLocation>
        <location evidence="1">Cytoplasm</location>
    </subcellularLocation>
</comment>
<comment type="similarity">
    <text evidence="1">Belongs to the methylthiotransferase family. MiaB subfamily.</text>
</comment>
<proteinExistence type="inferred from homology"/>
<evidence type="ECO:0000255" key="1">
    <source>
        <dbReference type="HAMAP-Rule" id="MF_01864"/>
    </source>
</evidence>
<evidence type="ECO:0000255" key="2">
    <source>
        <dbReference type="PROSITE-ProRule" id="PRU01266"/>
    </source>
</evidence>